<proteinExistence type="inferred from homology"/>
<comment type="catalytic activity">
    <reaction evidence="1">
        <text>2-(N(omega)-L-arginino)succinate = fumarate + L-arginine</text>
        <dbReference type="Rhea" id="RHEA:24020"/>
        <dbReference type="ChEBI" id="CHEBI:29806"/>
        <dbReference type="ChEBI" id="CHEBI:32682"/>
        <dbReference type="ChEBI" id="CHEBI:57472"/>
        <dbReference type="EC" id="4.3.2.1"/>
    </reaction>
</comment>
<comment type="pathway">
    <text evidence="1">Amino-acid biosynthesis; L-arginine biosynthesis; L-arginine from L-ornithine and carbamoyl phosphate: step 3/3.</text>
</comment>
<comment type="subcellular location">
    <subcellularLocation>
        <location evidence="1">Cytoplasm</location>
    </subcellularLocation>
</comment>
<comment type="similarity">
    <text evidence="1">Belongs to the lyase 1 family. Argininosuccinate lyase subfamily.</text>
</comment>
<name>ARLY_SYNSC</name>
<protein>
    <recommendedName>
        <fullName evidence="1">Argininosuccinate lyase</fullName>
        <shortName evidence="1">ASAL</shortName>
        <ecNumber evidence="1">4.3.2.1</ecNumber>
    </recommendedName>
    <alternativeName>
        <fullName evidence="1">Arginosuccinase</fullName>
    </alternativeName>
</protein>
<reference key="1">
    <citation type="submission" date="2005-07" db="EMBL/GenBank/DDBJ databases">
        <title>Complete sequence of Synechococcus sp. CC9605.</title>
        <authorList>
            <consortium name="US DOE Joint Genome Institute"/>
            <person name="Copeland A."/>
            <person name="Lucas S."/>
            <person name="Lapidus A."/>
            <person name="Barry K."/>
            <person name="Detter J.C."/>
            <person name="Glavina T."/>
            <person name="Hammon N."/>
            <person name="Israni S."/>
            <person name="Pitluck S."/>
            <person name="Schmutz J."/>
            <person name="Martinez M."/>
            <person name="Larimer F."/>
            <person name="Land M."/>
            <person name="Kyrpides N."/>
            <person name="Ivanova N."/>
            <person name="Richardson P."/>
        </authorList>
    </citation>
    <scope>NUCLEOTIDE SEQUENCE [LARGE SCALE GENOMIC DNA]</scope>
    <source>
        <strain>CC9605</strain>
    </source>
</reference>
<dbReference type="EC" id="4.3.2.1" evidence="1"/>
<dbReference type="EMBL" id="CP000110">
    <property type="protein sequence ID" value="ABB33795.1"/>
    <property type="molecule type" value="Genomic_DNA"/>
</dbReference>
<dbReference type="RefSeq" id="WP_011363057.1">
    <property type="nucleotide sequence ID" value="NC_007516.1"/>
</dbReference>
<dbReference type="SMR" id="Q3ANN7"/>
<dbReference type="STRING" id="110662.Syncc9605_0013"/>
<dbReference type="KEGG" id="syd:Syncc9605_0013"/>
<dbReference type="eggNOG" id="COG0165">
    <property type="taxonomic scope" value="Bacteria"/>
</dbReference>
<dbReference type="HOGENOM" id="CLU_027272_2_3_3"/>
<dbReference type="OrthoDB" id="9769623at2"/>
<dbReference type="UniPathway" id="UPA00068">
    <property type="reaction ID" value="UER00114"/>
</dbReference>
<dbReference type="GO" id="GO:0005829">
    <property type="term" value="C:cytosol"/>
    <property type="evidence" value="ECO:0007669"/>
    <property type="project" value="TreeGrafter"/>
</dbReference>
<dbReference type="GO" id="GO:0004056">
    <property type="term" value="F:argininosuccinate lyase activity"/>
    <property type="evidence" value="ECO:0007669"/>
    <property type="project" value="UniProtKB-UniRule"/>
</dbReference>
<dbReference type="GO" id="GO:0042450">
    <property type="term" value="P:arginine biosynthetic process via ornithine"/>
    <property type="evidence" value="ECO:0007669"/>
    <property type="project" value="InterPro"/>
</dbReference>
<dbReference type="GO" id="GO:0006526">
    <property type="term" value="P:L-arginine biosynthetic process"/>
    <property type="evidence" value="ECO:0007669"/>
    <property type="project" value="UniProtKB-UniRule"/>
</dbReference>
<dbReference type="CDD" id="cd01359">
    <property type="entry name" value="Argininosuccinate_lyase"/>
    <property type="match status" value="1"/>
</dbReference>
<dbReference type="FunFam" id="1.10.275.10:FF:000002">
    <property type="entry name" value="Argininosuccinate lyase"/>
    <property type="match status" value="1"/>
</dbReference>
<dbReference type="FunFam" id="1.10.40.30:FF:000001">
    <property type="entry name" value="Argininosuccinate lyase"/>
    <property type="match status" value="1"/>
</dbReference>
<dbReference type="FunFam" id="1.20.200.10:FF:000015">
    <property type="entry name" value="argininosuccinate lyase isoform X2"/>
    <property type="match status" value="1"/>
</dbReference>
<dbReference type="Gene3D" id="1.10.40.30">
    <property type="entry name" value="Fumarase/aspartase (C-terminal domain)"/>
    <property type="match status" value="1"/>
</dbReference>
<dbReference type="Gene3D" id="1.20.200.10">
    <property type="entry name" value="Fumarase/aspartase (Central domain)"/>
    <property type="match status" value="1"/>
</dbReference>
<dbReference type="Gene3D" id="1.10.275.10">
    <property type="entry name" value="Fumarase/aspartase (N-terminal domain)"/>
    <property type="match status" value="1"/>
</dbReference>
<dbReference type="HAMAP" id="MF_00006">
    <property type="entry name" value="Arg_succ_lyase"/>
    <property type="match status" value="1"/>
</dbReference>
<dbReference type="InterPro" id="IPR029419">
    <property type="entry name" value="Arg_succ_lyase_C"/>
</dbReference>
<dbReference type="InterPro" id="IPR009049">
    <property type="entry name" value="Argininosuccinate_lyase"/>
</dbReference>
<dbReference type="InterPro" id="IPR024083">
    <property type="entry name" value="Fumarase/histidase_N"/>
</dbReference>
<dbReference type="InterPro" id="IPR020557">
    <property type="entry name" value="Fumarate_lyase_CS"/>
</dbReference>
<dbReference type="InterPro" id="IPR000362">
    <property type="entry name" value="Fumarate_lyase_fam"/>
</dbReference>
<dbReference type="InterPro" id="IPR022761">
    <property type="entry name" value="Fumarate_lyase_N"/>
</dbReference>
<dbReference type="InterPro" id="IPR008948">
    <property type="entry name" value="L-Aspartase-like"/>
</dbReference>
<dbReference type="NCBIfam" id="TIGR00838">
    <property type="entry name" value="argH"/>
    <property type="match status" value="1"/>
</dbReference>
<dbReference type="PANTHER" id="PTHR43814">
    <property type="entry name" value="ARGININOSUCCINATE LYASE"/>
    <property type="match status" value="1"/>
</dbReference>
<dbReference type="PANTHER" id="PTHR43814:SF1">
    <property type="entry name" value="ARGININOSUCCINATE LYASE"/>
    <property type="match status" value="1"/>
</dbReference>
<dbReference type="Pfam" id="PF14698">
    <property type="entry name" value="ASL_C2"/>
    <property type="match status" value="1"/>
</dbReference>
<dbReference type="Pfam" id="PF00206">
    <property type="entry name" value="Lyase_1"/>
    <property type="match status" value="1"/>
</dbReference>
<dbReference type="PRINTS" id="PR00145">
    <property type="entry name" value="ARGSUCLYASE"/>
</dbReference>
<dbReference type="PRINTS" id="PR00149">
    <property type="entry name" value="FUMRATELYASE"/>
</dbReference>
<dbReference type="SUPFAM" id="SSF48557">
    <property type="entry name" value="L-aspartase-like"/>
    <property type="match status" value="1"/>
</dbReference>
<dbReference type="PROSITE" id="PS00163">
    <property type="entry name" value="FUMARATE_LYASES"/>
    <property type="match status" value="1"/>
</dbReference>
<organism>
    <name type="scientific">Synechococcus sp. (strain CC9605)</name>
    <dbReference type="NCBI Taxonomy" id="110662"/>
    <lineage>
        <taxon>Bacteria</taxon>
        <taxon>Bacillati</taxon>
        <taxon>Cyanobacteriota</taxon>
        <taxon>Cyanophyceae</taxon>
        <taxon>Synechococcales</taxon>
        <taxon>Synechococcaceae</taxon>
        <taxon>Synechococcus</taxon>
    </lineage>
</organism>
<evidence type="ECO:0000255" key="1">
    <source>
        <dbReference type="HAMAP-Rule" id="MF_00006"/>
    </source>
</evidence>
<gene>
    <name evidence="1" type="primary">argH</name>
    <name type="ordered locus">Syncc9605_0013</name>
</gene>
<feature type="chain" id="PRO_0000240780" description="Argininosuccinate lyase">
    <location>
        <begin position="1"/>
        <end position="472"/>
    </location>
</feature>
<accession>Q3ANN7</accession>
<keyword id="KW-0028">Amino-acid biosynthesis</keyword>
<keyword id="KW-0055">Arginine biosynthesis</keyword>
<keyword id="KW-0963">Cytoplasm</keyword>
<keyword id="KW-0456">Lyase</keyword>
<sequence length="472" mass="52271">MAGGVTGGAAGTWSDRFEQGLHPFIEAFNASIGFDLTLLQEDLDGSIAHARMLASVGVITEAEAEQLVEGLETVRAEAASGSFQPGLADEDVHFAVERRLIALLGPVGKKLHTGRSRNDQVGTDLRLWLRRRLDGLDQDLQRLQGALLTQADRHRRTMIPGYTHLQRAQPLCLAHHLLAYVEMLERDRERLQDARKRVNICPLGAAALAGTPVPIDRQRTAKELGFSAVYANSLDAVSDRDFCVEFSAAASLVMVHLSRLAEEVIAWASEEFGFVRLSDRCATGSSLMPQKKNPDVPELVRGKTGRVFGHLQGLLTMIKGLPLAYNKDFQEDKEALFDAFRTTRDCVEAMAILFEEGLDFRVERLNEAVEQDFSNATDVADYLVSRGVPFREAYQLVGAVVRRCLEQGCLLRDLDLSAWKELHPAFEADLHDALAPRAVVAARRSEGGTGFERVDEQLQRWLQRFNGTQPVG</sequence>